<proteinExistence type="inferred from homology"/>
<keyword id="KW-0963">Cytoplasm</keyword>
<keyword id="KW-0441">Lipid A biosynthesis</keyword>
<keyword id="KW-0444">Lipid biosynthesis</keyword>
<keyword id="KW-0443">Lipid metabolism</keyword>
<keyword id="KW-0456">Lyase</keyword>
<protein>
    <recommendedName>
        <fullName evidence="1">3-hydroxyacyl-[acyl-carrier-protein] dehydratase FabZ</fullName>
        <ecNumber evidence="1">4.2.1.59</ecNumber>
    </recommendedName>
    <alternativeName>
        <fullName evidence="1">(3R)-hydroxymyristoyl-[acyl-carrier-protein] dehydratase</fullName>
        <shortName evidence="1">(3R)-hydroxymyristoyl-ACP dehydrase</shortName>
    </alternativeName>
    <alternativeName>
        <fullName evidence="1">Beta-hydroxyacyl-ACP dehydratase</fullName>
    </alternativeName>
</protein>
<evidence type="ECO:0000255" key="1">
    <source>
        <dbReference type="HAMAP-Rule" id="MF_00406"/>
    </source>
</evidence>
<name>FABZ_STRPG</name>
<comment type="function">
    <text evidence="1">Involved in unsaturated fatty acids biosynthesis. Catalyzes the dehydration of short chain beta-hydroxyacyl-ACPs and long chain saturated and unsaturated beta-hydroxyacyl-ACPs.</text>
</comment>
<comment type="catalytic activity">
    <reaction evidence="1">
        <text>a (3R)-hydroxyacyl-[ACP] = a (2E)-enoyl-[ACP] + H2O</text>
        <dbReference type="Rhea" id="RHEA:13097"/>
        <dbReference type="Rhea" id="RHEA-COMP:9925"/>
        <dbReference type="Rhea" id="RHEA-COMP:9945"/>
        <dbReference type="ChEBI" id="CHEBI:15377"/>
        <dbReference type="ChEBI" id="CHEBI:78784"/>
        <dbReference type="ChEBI" id="CHEBI:78827"/>
        <dbReference type="EC" id="4.2.1.59"/>
    </reaction>
</comment>
<comment type="subcellular location">
    <subcellularLocation>
        <location evidence="1">Cytoplasm</location>
    </subcellularLocation>
</comment>
<comment type="similarity">
    <text evidence="1">Belongs to the thioester dehydratase family. FabZ subfamily.</text>
</comment>
<feature type="chain" id="PRO_0000301933" description="3-hydroxyacyl-[acyl-carrier-protein] dehydratase FabZ">
    <location>
        <begin position="1"/>
        <end position="139"/>
    </location>
</feature>
<feature type="active site" evidence="1">
    <location>
        <position position="46"/>
    </location>
</feature>
<organism>
    <name type="scientific">Streptococcus pyogenes serotype M5 (strain Manfredo)</name>
    <dbReference type="NCBI Taxonomy" id="160491"/>
    <lineage>
        <taxon>Bacteria</taxon>
        <taxon>Bacillati</taxon>
        <taxon>Bacillota</taxon>
        <taxon>Bacilli</taxon>
        <taxon>Lactobacillales</taxon>
        <taxon>Streptococcaceae</taxon>
        <taxon>Streptococcus</taxon>
    </lineage>
</organism>
<accession>A2RCX7</accession>
<sequence>MDIREIQAALPHRYPMLLVDRVLEVSDDHIVAIKNVTINEPFFNGHFPHYPVMPGVLIMEALAQTAGVLELSKEENKGKLVFYAGMDKVKFKKQVVPGDQLVMTATFIKRRGTIAVVEARAEVDGKLAASGTLTFACGQ</sequence>
<dbReference type="EC" id="4.2.1.59" evidence="1"/>
<dbReference type="EMBL" id="AM295007">
    <property type="protein sequence ID" value="CAM29700.1"/>
    <property type="molecule type" value="Genomic_DNA"/>
</dbReference>
<dbReference type="SMR" id="A2RCX7"/>
<dbReference type="KEGG" id="spf:SpyM50358"/>
<dbReference type="HOGENOM" id="CLU_078912_3_0_9"/>
<dbReference type="GO" id="GO:0005737">
    <property type="term" value="C:cytoplasm"/>
    <property type="evidence" value="ECO:0007669"/>
    <property type="project" value="UniProtKB-SubCell"/>
</dbReference>
<dbReference type="GO" id="GO:0016020">
    <property type="term" value="C:membrane"/>
    <property type="evidence" value="ECO:0007669"/>
    <property type="project" value="GOC"/>
</dbReference>
<dbReference type="GO" id="GO:0019171">
    <property type="term" value="F:(3R)-hydroxyacyl-[acyl-carrier-protein] dehydratase activity"/>
    <property type="evidence" value="ECO:0007669"/>
    <property type="project" value="UniProtKB-EC"/>
</dbReference>
<dbReference type="GO" id="GO:0006633">
    <property type="term" value="P:fatty acid biosynthetic process"/>
    <property type="evidence" value="ECO:0007669"/>
    <property type="project" value="UniProtKB-UniRule"/>
</dbReference>
<dbReference type="GO" id="GO:0009245">
    <property type="term" value="P:lipid A biosynthetic process"/>
    <property type="evidence" value="ECO:0007669"/>
    <property type="project" value="UniProtKB-UniRule"/>
</dbReference>
<dbReference type="CDD" id="cd01288">
    <property type="entry name" value="FabZ"/>
    <property type="match status" value="1"/>
</dbReference>
<dbReference type="FunFam" id="3.10.129.10:FF:000001">
    <property type="entry name" value="3-hydroxyacyl-[acyl-carrier-protein] dehydratase FabZ"/>
    <property type="match status" value="1"/>
</dbReference>
<dbReference type="Gene3D" id="3.10.129.10">
    <property type="entry name" value="Hotdog Thioesterase"/>
    <property type="match status" value="1"/>
</dbReference>
<dbReference type="HAMAP" id="MF_00406">
    <property type="entry name" value="FabZ"/>
    <property type="match status" value="1"/>
</dbReference>
<dbReference type="InterPro" id="IPR013114">
    <property type="entry name" value="FabA_FabZ"/>
</dbReference>
<dbReference type="InterPro" id="IPR010084">
    <property type="entry name" value="FabZ"/>
</dbReference>
<dbReference type="InterPro" id="IPR029069">
    <property type="entry name" value="HotDog_dom_sf"/>
</dbReference>
<dbReference type="NCBIfam" id="TIGR01750">
    <property type="entry name" value="fabZ"/>
    <property type="match status" value="1"/>
</dbReference>
<dbReference type="NCBIfam" id="NF000582">
    <property type="entry name" value="PRK00006.1"/>
    <property type="match status" value="1"/>
</dbReference>
<dbReference type="PANTHER" id="PTHR30272">
    <property type="entry name" value="3-HYDROXYACYL-[ACYL-CARRIER-PROTEIN] DEHYDRATASE"/>
    <property type="match status" value="1"/>
</dbReference>
<dbReference type="PANTHER" id="PTHR30272:SF1">
    <property type="entry name" value="3-HYDROXYACYL-[ACYL-CARRIER-PROTEIN] DEHYDRATASE"/>
    <property type="match status" value="1"/>
</dbReference>
<dbReference type="Pfam" id="PF07977">
    <property type="entry name" value="FabA"/>
    <property type="match status" value="1"/>
</dbReference>
<dbReference type="SUPFAM" id="SSF54637">
    <property type="entry name" value="Thioesterase/thiol ester dehydrase-isomerase"/>
    <property type="match status" value="1"/>
</dbReference>
<gene>
    <name evidence="1" type="primary">fabZ</name>
    <name type="ordered locus">SpyM50358</name>
</gene>
<reference key="1">
    <citation type="journal article" date="2007" name="J. Bacteriol.">
        <title>Complete genome of acute rheumatic fever-associated serotype M5 Streptococcus pyogenes strain Manfredo.</title>
        <authorList>
            <person name="Holden M.T.G."/>
            <person name="Scott A."/>
            <person name="Cherevach I."/>
            <person name="Chillingworth T."/>
            <person name="Churcher C."/>
            <person name="Cronin A."/>
            <person name="Dowd L."/>
            <person name="Feltwell T."/>
            <person name="Hamlin N."/>
            <person name="Holroyd S."/>
            <person name="Jagels K."/>
            <person name="Moule S."/>
            <person name="Mungall K."/>
            <person name="Quail M.A."/>
            <person name="Price C."/>
            <person name="Rabbinowitsch E."/>
            <person name="Sharp S."/>
            <person name="Skelton J."/>
            <person name="Whitehead S."/>
            <person name="Barrell B.G."/>
            <person name="Kehoe M."/>
            <person name="Parkhill J."/>
        </authorList>
    </citation>
    <scope>NUCLEOTIDE SEQUENCE [LARGE SCALE GENOMIC DNA]</scope>
    <source>
        <strain>Manfredo</strain>
    </source>
</reference>